<protein>
    <recommendedName>
        <fullName>Proline-rich protein 5</fullName>
    </recommendedName>
    <alternativeName>
        <fullName>Protein observed with Rictor-1</fullName>
        <shortName>Protor-1</shortName>
    </alternativeName>
</protein>
<sequence length="387" mass="42540">MRTLRRLKFMSSPSLSDLGKREPGAAGADERGTQQRRACANATWNSIHNGVIAVFQRKGLPDQELFILNEGVRQLLKTELGSFFTEYLQNQLLTKGMVILRDKIRFYEGQKLLDSLAETWDFFFSDVLPTLQAIFYPVQGKEPSVRQLALLHFRNTITLSVKLEDALARSHACVPPAIAQMLLVLQGVHESRGVTEDYLRLETLIQKVVSPYLGTYGLYSNEGPCTHSCILEKRFLRRSRSGDILAKNPVVRSKSYNTPLLNPVAEHEAEGTASGGTSIRRHSVSEMTSCPEPQGFVDTPDQGPSGTFRSSPSPHSGPCPSRLYPPAHSPEQGPDHGSPPTSSPETLVDQILESVDSDSEGIFIDFGRGSRSSVSDFEAAGGRPSVV</sequence>
<name>PRR5_RAT</name>
<keyword id="KW-0131">Cell cycle</keyword>
<keyword id="KW-0597">Phosphoprotein</keyword>
<keyword id="KW-1185">Reference proteome</keyword>
<keyword id="KW-0043">Tumor suppressor</keyword>
<proteinExistence type="evidence at transcript level"/>
<evidence type="ECO:0000250" key="1">
    <source>
        <dbReference type="UniProtKB" id="P85299"/>
    </source>
</evidence>
<evidence type="ECO:0000250" key="2">
    <source>
        <dbReference type="UniProtKB" id="Q812A5"/>
    </source>
</evidence>
<evidence type="ECO:0000256" key="3">
    <source>
        <dbReference type="SAM" id="MobiDB-lite"/>
    </source>
</evidence>
<evidence type="ECO:0000305" key="4"/>
<evidence type="ECO:0000312" key="5">
    <source>
        <dbReference type="EMBL" id="AAH90007.1"/>
    </source>
</evidence>
<organism>
    <name type="scientific">Rattus norvegicus</name>
    <name type="common">Rat</name>
    <dbReference type="NCBI Taxonomy" id="10116"/>
    <lineage>
        <taxon>Eukaryota</taxon>
        <taxon>Metazoa</taxon>
        <taxon>Chordata</taxon>
        <taxon>Craniata</taxon>
        <taxon>Vertebrata</taxon>
        <taxon>Euteleostomi</taxon>
        <taxon>Mammalia</taxon>
        <taxon>Eutheria</taxon>
        <taxon>Euarchontoglires</taxon>
        <taxon>Glires</taxon>
        <taxon>Rodentia</taxon>
        <taxon>Myomorpha</taxon>
        <taxon>Muroidea</taxon>
        <taxon>Muridae</taxon>
        <taxon>Murinae</taxon>
        <taxon>Rattus</taxon>
    </lineage>
</organism>
<reference evidence="5" key="1">
    <citation type="journal article" date="2004" name="Genome Res.">
        <title>The status, quality, and expansion of the NIH full-length cDNA project: the Mammalian Gene Collection (MGC).</title>
        <authorList>
            <consortium name="The MGC Project Team"/>
        </authorList>
    </citation>
    <scope>NUCLEOTIDE SEQUENCE [LARGE SCALE MRNA]</scope>
    <source>
        <tissue evidence="5">Liver</tissue>
    </source>
</reference>
<comment type="function">
    <text evidence="1">Associated subunit of mTORC2, which regulates cell growth and survival in response to hormonal signals. mTORC2 is activated by growth factors, but, in contrast to mTORC1, seems to be nutrient-insensitive. mTORC2 seems to function upstream of Rho GTPases to regulate the actin cytoskeleton, probably by activating one or more Rho-type guanine nucleotide exchange factors. PRR5 plays an important role in regulation of PDGFRB expression and in modulation of platelet-derived growth factor signaling. May act as a tumor suppressor in breast cancer.</text>
</comment>
<comment type="subunit">
    <text evidence="1">Associated component of the mechanistic target of rapamycin complex 2 (mTORC2). Binds directly to MTOR and RICTOR within the TORC2 complex.</text>
</comment>
<comment type="similarity">
    <text evidence="4">Belongs to the PROTOR family.</text>
</comment>
<feature type="chain" id="PRO_0000308164" description="Proline-rich protein 5">
    <location>
        <begin position="1"/>
        <end position="387"/>
    </location>
</feature>
<feature type="region of interest" description="Interaction with RICTOR" evidence="1">
    <location>
        <begin position="10"/>
        <end position="96"/>
    </location>
</feature>
<feature type="region of interest" description="Disordered" evidence="3">
    <location>
        <begin position="11"/>
        <end position="33"/>
    </location>
</feature>
<feature type="region of interest" description="Interaction with RICTOR" evidence="1">
    <location>
        <begin position="189"/>
        <end position="219"/>
    </location>
</feature>
<feature type="region of interest" description="Disordered" evidence="3">
    <location>
        <begin position="262"/>
        <end position="347"/>
    </location>
</feature>
<feature type="region of interest" description="Disordered" evidence="3">
    <location>
        <begin position="365"/>
        <end position="387"/>
    </location>
</feature>
<feature type="compositionally biased region" description="Basic and acidic residues" evidence="3">
    <location>
        <begin position="18"/>
        <end position="33"/>
    </location>
</feature>
<feature type="compositionally biased region" description="Low complexity" evidence="3">
    <location>
        <begin position="310"/>
        <end position="321"/>
    </location>
</feature>
<feature type="modified residue" description="Phosphoserine" evidence="2">
    <location>
        <position position="253"/>
    </location>
</feature>
<feature type="modified residue" description="Phosphoserine" evidence="2">
    <location>
        <position position="373"/>
    </location>
</feature>
<accession>Q5FVG6</accession>
<dbReference type="EMBL" id="BC090007">
    <property type="protein sequence ID" value="AAH90007.1"/>
    <property type="molecule type" value="mRNA"/>
</dbReference>
<dbReference type="RefSeq" id="NP_001012121.1">
    <property type="nucleotide sequence ID" value="NM_001012121.1"/>
</dbReference>
<dbReference type="SMR" id="Q5FVG6"/>
<dbReference type="FunCoup" id="Q5FVG6">
    <property type="interactions" value="479"/>
</dbReference>
<dbReference type="STRING" id="10116.ENSRNOP00000016679"/>
<dbReference type="iPTMnet" id="Q5FVG6"/>
<dbReference type="PhosphoSitePlus" id="Q5FVG6"/>
<dbReference type="PaxDb" id="10116-ENSRNOP00000016679"/>
<dbReference type="Ensembl" id="ENSRNOT00000117245.1">
    <property type="protein sequence ID" value="ENSRNOP00000095214.1"/>
    <property type="gene ID" value="ENSRNOG00000069507.1"/>
</dbReference>
<dbReference type="GeneID" id="315189"/>
<dbReference type="KEGG" id="rno:315189"/>
<dbReference type="AGR" id="RGD:1307954"/>
<dbReference type="CTD" id="55615"/>
<dbReference type="RGD" id="1307954">
    <property type="gene designation" value="Prr5"/>
</dbReference>
<dbReference type="eggNOG" id="KOG4406">
    <property type="taxonomic scope" value="Eukaryota"/>
</dbReference>
<dbReference type="GeneTree" id="ENSGT00530000063981"/>
<dbReference type="HOGENOM" id="CLU_046146_0_0_1"/>
<dbReference type="InParanoid" id="Q5FVG6"/>
<dbReference type="OMA" id="DVDNSDH"/>
<dbReference type="OrthoDB" id="2290221at2759"/>
<dbReference type="PhylomeDB" id="Q5FVG6"/>
<dbReference type="TreeFam" id="TF314826"/>
<dbReference type="Reactome" id="R-RNO-1257604">
    <property type="pathway name" value="PIP3 activates AKT signaling"/>
</dbReference>
<dbReference type="Reactome" id="R-RNO-389357">
    <property type="pathway name" value="CD28 dependent PI3K/Akt signaling"/>
</dbReference>
<dbReference type="Reactome" id="R-RNO-5218920">
    <property type="pathway name" value="VEGFR2 mediated vascular permeability"/>
</dbReference>
<dbReference type="Reactome" id="R-RNO-6804757">
    <property type="pathway name" value="Regulation of TP53 Degradation"/>
</dbReference>
<dbReference type="Reactome" id="R-RNO-9856530">
    <property type="pathway name" value="High laminar flow shear stress activates signaling by PIEZO1 and PECAM1:CDH5:KDR in endothelial cells"/>
</dbReference>
<dbReference type="PRO" id="PR:Q5FVG6"/>
<dbReference type="Proteomes" id="UP000002494">
    <property type="component" value="Chromosome 7"/>
</dbReference>
<dbReference type="GO" id="GO:0031932">
    <property type="term" value="C:TORC2 complex"/>
    <property type="evidence" value="ECO:0000266"/>
    <property type="project" value="RGD"/>
</dbReference>
<dbReference type="GO" id="GO:0043491">
    <property type="term" value="P:phosphatidylinositol 3-kinase/protein kinase B signal transduction"/>
    <property type="evidence" value="ECO:0000266"/>
    <property type="project" value="RGD"/>
</dbReference>
<dbReference type="GO" id="GO:0051897">
    <property type="term" value="P:positive regulation of phosphatidylinositol 3-kinase/protein kinase B signal transduction"/>
    <property type="evidence" value="ECO:0000266"/>
    <property type="project" value="RGD"/>
</dbReference>
<dbReference type="GO" id="GO:0038203">
    <property type="term" value="P:TORC2 signaling"/>
    <property type="evidence" value="ECO:0000318"/>
    <property type="project" value="GO_Central"/>
</dbReference>
<dbReference type="InterPro" id="IPR013745">
    <property type="entry name" value="Bit61/PRR5"/>
</dbReference>
<dbReference type="PANTHER" id="PTHR32428:SF4">
    <property type="entry name" value="PROLINE-RICH PROTEIN 5"/>
    <property type="match status" value="1"/>
</dbReference>
<dbReference type="PANTHER" id="PTHR32428">
    <property type="entry name" value="TARGET OF RAPAMYCIN COMPLEX 2 SUBUNIT BIT61-RELATED"/>
    <property type="match status" value="1"/>
</dbReference>
<dbReference type="Pfam" id="PF08539">
    <property type="entry name" value="HbrB"/>
    <property type="match status" value="1"/>
</dbReference>
<gene>
    <name evidence="1" type="primary">Prr5</name>
    <name type="synonym">Protor1</name>
</gene>